<protein>
    <recommendedName>
        <fullName evidence="1">Methionyl-tRNA formyltransferase</fullName>
        <ecNumber evidence="1">2.1.2.9</ecNumber>
    </recommendedName>
</protein>
<reference key="1">
    <citation type="submission" date="2007-10" db="EMBL/GenBank/DDBJ databases">
        <title>Complete sequence of chromosome 1 of Burkholderia multivorans ATCC 17616.</title>
        <authorList>
            <person name="Copeland A."/>
            <person name="Lucas S."/>
            <person name="Lapidus A."/>
            <person name="Barry K."/>
            <person name="Glavina del Rio T."/>
            <person name="Dalin E."/>
            <person name="Tice H."/>
            <person name="Pitluck S."/>
            <person name="Chain P."/>
            <person name="Malfatti S."/>
            <person name="Shin M."/>
            <person name="Vergez L."/>
            <person name="Schmutz J."/>
            <person name="Larimer F."/>
            <person name="Land M."/>
            <person name="Hauser L."/>
            <person name="Kyrpides N."/>
            <person name="Kim E."/>
            <person name="Tiedje J."/>
            <person name="Richardson P."/>
        </authorList>
    </citation>
    <scope>NUCLEOTIDE SEQUENCE [LARGE SCALE GENOMIC DNA]</scope>
    <source>
        <strain>ATCC 17616 / 249</strain>
    </source>
</reference>
<reference key="2">
    <citation type="submission" date="2007-04" db="EMBL/GenBank/DDBJ databases">
        <title>Complete genome sequence of Burkholderia multivorans ATCC 17616.</title>
        <authorList>
            <person name="Ohtsubo Y."/>
            <person name="Yamashita A."/>
            <person name="Kurokawa K."/>
            <person name="Takami H."/>
            <person name="Yuhara S."/>
            <person name="Nishiyama E."/>
            <person name="Endo R."/>
            <person name="Miyazaki R."/>
            <person name="Ono A."/>
            <person name="Yano K."/>
            <person name="Ito M."/>
            <person name="Sota M."/>
            <person name="Yuji N."/>
            <person name="Hattori M."/>
            <person name="Tsuda M."/>
        </authorList>
    </citation>
    <scope>NUCLEOTIDE SEQUENCE [LARGE SCALE GENOMIC DNA]</scope>
    <source>
        <strain>ATCC 17616 / 249</strain>
    </source>
</reference>
<evidence type="ECO:0000255" key="1">
    <source>
        <dbReference type="HAMAP-Rule" id="MF_00182"/>
    </source>
</evidence>
<name>FMT_BURM1</name>
<sequence length="327" mass="33992">MTHTLRVIFAGTPEFAAAALAAIHDAGFAAPLVLTQPDRPAGRGMKLQASAVKRYALEHGLPVAQPPSLRRAGKYPAEAAEAIELLRATPHDVMVVAAYGLLLPQEVLDIPRHGCINIHASLLPRWRGAAPIHRAIEAGDAETGVTLMQMDAGLDTGAMIQASRIAIAPDDTTATLHDRLAADGARLIVDALARLERDGTLAATPQPADGVTYAEKIGKHEAALDWRKPADVLARQVRAFDPFPGGVATLDGAAIKIWAAEPATGRGDAAPGTIVEAAPDGVIVACGTGALRVTQLQKPGGKRLPAREFLAGSPLAAGQRFALPDAG</sequence>
<proteinExistence type="inferred from homology"/>
<feature type="chain" id="PRO_1000098386" description="Methionyl-tRNA formyltransferase">
    <location>
        <begin position="1"/>
        <end position="327"/>
    </location>
</feature>
<feature type="binding site" evidence="1">
    <location>
        <begin position="121"/>
        <end position="124"/>
    </location>
    <ligand>
        <name>(6S)-5,6,7,8-tetrahydrofolate</name>
        <dbReference type="ChEBI" id="CHEBI:57453"/>
    </ligand>
</feature>
<keyword id="KW-0648">Protein biosynthesis</keyword>
<keyword id="KW-1185">Reference proteome</keyword>
<keyword id="KW-0808">Transferase</keyword>
<gene>
    <name evidence="1" type="primary">fmt</name>
    <name type="ordered locus">Bmul_3123</name>
    <name type="ordered locus">BMULJ_00107</name>
</gene>
<comment type="function">
    <text evidence="1">Attaches a formyl group to the free amino group of methionyl-tRNA(fMet). The formyl group appears to play a dual role in the initiator identity of N-formylmethionyl-tRNA by promoting its recognition by IF2 and preventing the misappropriation of this tRNA by the elongation apparatus.</text>
</comment>
<comment type="catalytic activity">
    <reaction evidence="1">
        <text>L-methionyl-tRNA(fMet) + (6R)-10-formyltetrahydrofolate = N-formyl-L-methionyl-tRNA(fMet) + (6S)-5,6,7,8-tetrahydrofolate + H(+)</text>
        <dbReference type="Rhea" id="RHEA:24380"/>
        <dbReference type="Rhea" id="RHEA-COMP:9952"/>
        <dbReference type="Rhea" id="RHEA-COMP:9953"/>
        <dbReference type="ChEBI" id="CHEBI:15378"/>
        <dbReference type="ChEBI" id="CHEBI:57453"/>
        <dbReference type="ChEBI" id="CHEBI:78530"/>
        <dbReference type="ChEBI" id="CHEBI:78844"/>
        <dbReference type="ChEBI" id="CHEBI:195366"/>
        <dbReference type="EC" id="2.1.2.9"/>
    </reaction>
</comment>
<comment type="similarity">
    <text evidence="1">Belongs to the Fmt family.</text>
</comment>
<dbReference type="EC" id="2.1.2.9" evidence="1"/>
<dbReference type="EMBL" id="CP000868">
    <property type="protein sequence ID" value="ABX16807.1"/>
    <property type="molecule type" value="Genomic_DNA"/>
</dbReference>
<dbReference type="EMBL" id="AP009385">
    <property type="protein sequence ID" value="BAG42086.1"/>
    <property type="molecule type" value="Genomic_DNA"/>
</dbReference>
<dbReference type="RefSeq" id="WP_012214367.1">
    <property type="nucleotide sequence ID" value="NC_010084.1"/>
</dbReference>
<dbReference type="SMR" id="A9AC69"/>
<dbReference type="STRING" id="395019.BMULJ_00107"/>
<dbReference type="KEGG" id="bmj:BMULJ_00107"/>
<dbReference type="KEGG" id="bmu:Bmul_3123"/>
<dbReference type="eggNOG" id="COG0223">
    <property type="taxonomic scope" value="Bacteria"/>
</dbReference>
<dbReference type="HOGENOM" id="CLU_033347_1_2_4"/>
<dbReference type="Proteomes" id="UP000008815">
    <property type="component" value="Chromosome 1"/>
</dbReference>
<dbReference type="GO" id="GO:0005829">
    <property type="term" value="C:cytosol"/>
    <property type="evidence" value="ECO:0007669"/>
    <property type="project" value="TreeGrafter"/>
</dbReference>
<dbReference type="GO" id="GO:0004479">
    <property type="term" value="F:methionyl-tRNA formyltransferase activity"/>
    <property type="evidence" value="ECO:0007669"/>
    <property type="project" value="UniProtKB-UniRule"/>
</dbReference>
<dbReference type="CDD" id="cd08646">
    <property type="entry name" value="FMT_core_Met-tRNA-FMT_N"/>
    <property type="match status" value="1"/>
</dbReference>
<dbReference type="CDD" id="cd08704">
    <property type="entry name" value="Met_tRNA_FMT_C"/>
    <property type="match status" value="1"/>
</dbReference>
<dbReference type="Gene3D" id="3.10.25.10">
    <property type="entry name" value="Formyl transferase, C-terminal domain"/>
    <property type="match status" value="1"/>
</dbReference>
<dbReference type="Gene3D" id="3.40.50.170">
    <property type="entry name" value="Formyl transferase, N-terminal domain"/>
    <property type="match status" value="1"/>
</dbReference>
<dbReference type="HAMAP" id="MF_00182">
    <property type="entry name" value="Formyl_trans"/>
    <property type="match status" value="1"/>
</dbReference>
<dbReference type="InterPro" id="IPR005794">
    <property type="entry name" value="Fmt"/>
</dbReference>
<dbReference type="InterPro" id="IPR005793">
    <property type="entry name" value="Formyl_trans_C"/>
</dbReference>
<dbReference type="InterPro" id="IPR037022">
    <property type="entry name" value="Formyl_trans_C_sf"/>
</dbReference>
<dbReference type="InterPro" id="IPR002376">
    <property type="entry name" value="Formyl_transf_N"/>
</dbReference>
<dbReference type="InterPro" id="IPR036477">
    <property type="entry name" value="Formyl_transf_N_sf"/>
</dbReference>
<dbReference type="InterPro" id="IPR011034">
    <property type="entry name" value="Formyl_transferase-like_C_sf"/>
</dbReference>
<dbReference type="InterPro" id="IPR001555">
    <property type="entry name" value="GART_AS"/>
</dbReference>
<dbReference type="InterPro" id="IPR044135">
    <property type="entry name" value="Met-tRNA-FMT_C"/>
</dbReference>
<dbReference type="InterPro" id="IPR041711">
    <property type="entry name" value="Met-tRNA-FMT_N"/>
</dbReference>
<dbReference type="NCBIfam" id="TIGR00460">
    <property type="entry name" value="fmt"/>
    <property type="match status" value="1"/>
</dbReference>
<dbReference type="PANTHER" id="PTHR11138">
    <property type="entry name" value="METHIONYL-TRNA FORMYLTRANSFERASE"/>
    <property type="match status" value="1"/>
</dbReference>
<dbReference type="PANTHER" id="PTHR11138:SF5">
    <property type="entry name" value="METHIONYL-TRNA FORMYLTRANSFERASE, MITOCHONDRIAL"/>
    <property type="match status" value="1"/>
</dbReference>
<dbReference type="Pfam" id="PF02911">
    <property type="entry name" value="Formyl_trans_C"/>
    <property type="match status" value="1"/>
</dbReference>
<dbReference type="Pfam" id="PF00551">
    <property type="entry name" value="Formyl_trans_N"/>
    <property type="match status" value="1"/>
</dbReference>
<dbReference type="SUPFAM" id="SSF50486">
    <property type="entry name" value="FMT C-terminal domain-like"/>
    <property type="match status" value="1"/>
</dbReference>
<dbReference type="SUPFAM" id="SSF53328">
    <property type="entry name" value="Formyltransferase"/>
    <property type="match status" value="1"/>
</dbReference>
<dbReference type="PROSITE" id="PS00373">
    <property type="entry name" value="GART"/>
    <property type="match status" value="1"/>
</dbReference>
<accession>A9AC69</accession>
<organism>
    <name type="scientific">Burkholderia multivorans (strain ATCC 17616 / 249)</name>
    <dbReference type="NCBI Taxonomy" id="395019"/>
    <lineage>
        <taxon>Bacteria</taxon>
        <taxon>Pseudomonadati</taxon>
        <taxon>Pseudomonadota</taxon>
        <taxon>Betaproteobacteria</taxon>
        <taxon>Burkholderiales</taxon>
        <taxon>Burkholderiaceae</taxon>
        <taxon>Burkholderia</taxon>
        <taxon>Burkholderia cepacia complex</taxon>
    </lineage>
</organism>